<keyword id="KW-1185">Reference proteome</keyword>
<name>VEAG_BPP22</name>
<accession>Q03549</accession>
<accession>Q7PCH1</accession>
<organism>
    <name type="scientific">Salmonella phage P22</name>
    <name type="common">Bacteriophage P22</name>
    <dbReference type="NCBI Taxonomy" id="10754"/>
    <lineage>
        <taxon>Viruses</taxon>
        <taxon>Duplodnaviria</taxon>
        <taxon>Heunggongvirae</taxon>
        <taxon>Uroviricota</taxon>
        <taxon>Caudoviricetes</taxon>
        <taxon>Lederbergvirus</taxon>
    </lineage>
</organism>
<reference key="1">
    <citation type="journal article" date="1993" name="Mol. Microbiol.">
        <title>The int genes of bacteriophages P22 and lambda are regulated by different mechanisms.</title>
        <authorList>
            <person name="Wulff D.L."/>
            <person name="Ho Y.S."/>
            <person name="Powers S."/>
            <person name="Rosenberg M."/>
        </authorList>
    </citation>
    <scope>NUCLEOTIDE SEQUENCE</scope>
</reference>
<reference key="2">
    <citation type="journal article" date="2000" name="J. Bacteriol.">
        <title>Sequence of the genome of Salmonella bacteriophage P22.</title>
        <authorList>
            <person name="Vander Byl C.S."/>
            <person name="Kropinski A.M.B."/>
        </authorList>
    </citation>
    <scope>NUCLEOTIDE SEQUENCE [LARGE SCALE GENOMIC DNA]</scope>
</reference>
<reference key="3">
    <citation type="journal article" date="2003" name="J. Bacteriol.">
        <title>Corrected sequence of the bacteriophage P22 genome.</title>
        <authorList>
            <person name="Pedulla M.L."/>
            <person name="Ford M.E."/>
            <person name="Karthikeyan T."/>
            <person name="Houtz J.M."/>
            <person name="Hendrix R.W."/>
            <person name="Hatfull G.F."/>
            <person name="Poteete A.R."/>
            <person name="Gilcrease E.B."/>
            <person name="Winn-Stapley D.A."/>
            <person name="Casjens S.R."/>
        </authorList>
    </citation>
    <scope>NUCLEOTIDE SEQUENCE [LARGE SCALE GENOMIC DNA]</scope>
</reference>
<gene>
    <name type="primary">eag</name>
</gene>
<dbReference type="EMBL" id="L06296">
    <property type="protein sequence ID" value="AAC18881.1"/>
    <property type="molecule type" value="Unassigned_DNA"/>
</dbReference>
<dbReference type="EMBL" id="AF217253">
    <property type="protein sequence ID" value="AAF75005.1"/>
    <property type="molecule type" value="Genomic_DNA"/>
</dbReference>
<dbReference type="EMBL" id="BK000583">
    <property type="protein sequence ID" value="DAA01001.1"/>
    <property type="molecule type" value="Genomic_DNA"/>
</dbReference>
<dbReference type="PIR" id="S35281">
    <property type="entry name" value="S35281"/>
</dbReference>
<dbReference type="RefSeq" id="NP_059587.1">
    <property type="nucleotide sequence ID" value="NC_002371.2"/>
</dbReference>
<dbReference type="SMR" id="Q03549"/>
<dbReference type="GeneID" id="1262797"/>
<dbReference type="KEGG" id="vg:1262797"/>
<dbReference type="OrthoDB" id="23098at10239"/>
<dbReference type="Proteomes" id="UP000001795">
    <property type="component" value="Segment"/>
</dbReference>
<dbReference type="Proteomes" id="UP000007960">
    <property type="component" value="Segment"/>
</dbReference>
<protein>
    <recommendedName>
        <fullName>Eag protein</fullName>
    </recommendedName>
</protein>
<organismHost>
    <name type="scientific">Salmonella typhimurium</name>
    <dbReference type="NCBI Taxonomy" id="90371"/>
</organismHost>
<feature type="chain" id="PRO_0000077773" description="Eag protein">
    <location>
        <begin position="1"/>
        <end position="59"/>
    </location>
</feature>
<sequence length="59" mass="6644">MSCPKCGSGNIAKEKTMRGWSDDYVCCDCGYNDSKDAFGERGKNEFVRINKERKGNEKS</sequence>
<proteinExistence type="predicted"/>